<gene>
    <name type="primary">lem3</name>
    <name type="ordered locus">lpg0696</name>
</gene>
<dbReference type="EC" id="3.1.3.-"/>
<dbReference type="EMBL" id="AE017354">
    <property type="protein sequence ID" value="AAU26785.1"/>
    <property type="molecule type" value="Genomic_DNA"/>
</dbReference>
<dbReference type="RefSeq" id="WP_010946433.1">
    <property type="nucleotide sequence ID" value="NC_002942.5"/>
</dbReference>
<dbReference type="RefSeq" id="YP_094732.1">
    <property type="nucleotide sequence ID" value="NC_002942.5"/>
</dbReference>
<dbReference type="PDB" id="8AGG">
    <property type="method" value="X-ray"/>
    <property type="resolution" value="3.60 A"/>
    <property type="chains" value="A=1-570"/>
</dbReference>
<dbReference type="PDB" id="8ALK">
    <property type="method" value="X-ray"/>
    <property type="resolution" value="2.15 A"/>
    <property type="chains" value="A=21-486"/>
</dbReference>
<dbReference type="PDB" id="8ANP">
    <property type="method" value="X-ray"/>
    <property type="resolution" value="2.20 A"/>
    <property type="chains" value="A/B/C/D=21-486"/>
</dbReference>
<dbReference type="PDBsum" id="8AGG"/>
<dbReference type="PDBsum" id="8ALK"/>
<dbReference type="PDBsum" id="8ANP"/>
<dbReference type="SASBDB" id="Q5ZXN5"/>
<dbReference type="SMR" id="Q5ZXN5"/>
<dbReference type="PaxDb" id="272624-lpg0696"/>
<dbReference type="GeneID" id="57034689"/>
<dbReference type="KEGG" id="lpn:lpg0696"/>
<dbReference type="PATRIC" id="fig|272624.6.peg.718"/>
<dbReference type="eggNOG" id="COG1391">
    <property type="taxonomic scope" value="Bacteria"/>
</dbReference>
<dbReference type="HOGENOM" id="CLU_514617_0_0_6"/>
<dbReference type="OrthoDB" id="5651943at2"/>
<dbReference type="SABIO-RK" id="Q5ZXN5"/>
<dbReference type="Proteomes" id="UP000000609">
    <property type="component" value="Chromosome"/>
</dbReference>
<dbReference type="GO" id="GO:0005576">
    <property type="term" value="C:extracellular region"/>
    <property type="evidence" value="ECO:0007669"/>
    <property type="project" value="UniProtKB-SubCell"/>
</dbReference>
<dbReference type="GO" id="GO:0030430">
    <property type="term" value="C:host cell cytoplasm"/>
    <property type="evidence" value="ECO:0000314"/>
    <property type="project" value="UniProtKB"/>
</dbReference>
<dbReference type="GO" id="GO:0044606">
    <property type="term" value="F:phosphocholine hydrolase activity"/>
    <property type="evidence" value="ECO:0000314"/>
    <property type="project" value="UniProtKB"/>
</dbReference>
<dbReference type="GO" id="GO:0043087">
    <property type="term" value="P:regulation of GTPase activity"/>
    <property type="evidence" value="ECO:0000314"/>
    <property type="project" value="UniProtKB"/>
</dbReference>
<dbReference type="InterPro" id="IPR036457">
    <property type="entry name" value="PPM-type-like_dom_sf"/>
</dbReference>
<dbReference type="SUPFAM" id="SSF81606">
    <property type="entry name" value="PP2C-like"/>
    <property type="match status" value="1"/>
</dbReference>
<protein>
    <recommendedName>
        <fullName>Phosphocholine hydrolase Lem3</fullName>
        <ecNumber>3.1.3.-</ecNumber>
    </recommendedName>
    <alternativeName>
        <fullName>Dephosphocholinase Lem3</fullName>
    </alternativeName>
</protein>
<name>LEM3_LEGPH</name>
<sequence length="570" mass="64738">MKLRYIINENKLVFTSCNMRDKIITGKKIIFSQSVAKDQTKNLSSFLSERFYSVNQSHNHSIIIGSSLSHQENDIEHDTILDTSGVLVTTDTNGIVNGARVAITDGLGGGNGDQEEDDEIYRVSHSSCENFLNCDQNIDTTLSLITQPKASDKKQTAPKTLQHTEASMAAFIYQNHPGKGYIGEFANIGDGLIIILDKRFKIKHMVSACHIYRGFGTWTPPSLQALATTANKDALLVRQTLKLAEGDIIISMTDGVWGELKTSLIAQTNDRRDIGVDKEYFKTLFDELTDAPYPSSFDIARIITQRAMSRSLERRKTLIKLINEIEQQHFHEKSVKTINEVLEYFIKTGHVETAQTLKAILFEDGLSDGITYFENIEIPLEMVMHDLKSRTVGDCSTINVTRIPYHLDELIRGFINYPEKHQILAPLFKARVKSEADLEEAFHRLSLEMVQPEIECPISETHFERAFKKETLDKTQAVLTHYFRISTGLDSKKNYQERLNDLSAYLSKESSLEKNDIKLLLSMLDSEIKPKTGVFQTLFGENQNKLYKAFHKKIELQLLDSEIENKNELK</sequence>
<reference key="1">
    <citation type="journal article" date="2004" name="Science">
        <title>The genomic sequence of the accidental pathogen Legionella pneumophila.</title>
        <authorList>
            <person name="Chien M."/>
            <person name="Morozova I."/>
            <person name="Shi S."/>
            <person name="Sheng H."/>
            <person name="Chen J."/>
            <person name="Gomez S.M."/>
            <person name="Asamani G."/>
            <person name="Hill K."/>
            <person name="Nuara J."/>
            <person name="Feder M."/>
            <person name="Rineer J."/>
            <person name="Greenberg J.J."/>
            <person name="Steshenko V."/>
            <person name="Park S.H."/>
            <person name="Zhao B."/>
            <person name="Teplitskaya E."/>
            <person name="Edwards J.R."/>
            <person name="Pampou S."/>
            <person name="Georghiou A."/>
            <person name="Chou I.-C."/>
            <person name="Iannuccilli W."/>
            <person name="Ulz M.E."/>
            <person name="Kim D.H."/>
            <person name="Geringer-Sameth A."/>
            <person name="Goldsberry C."/>
            <person name="Morozov P."/>
            <person name="Fischer S.G."/>
            <person name="Segal G."/>
            <person name="Qu X."/>
            <person name="Rzhetsky A."/>
            <person name="Zhang P."/>
            <person name="Cayanis E."/>
            <person name="De Jong P.J."/>
            <person name="Ju J."/>
            <person name="Kalachikov S."/>
            <person name="Shuman H.A."/>
            <person name="Russo J.J."/>
        </authorList>
    </citation>
    <scope>NUCLEOTIDE SEQUENCE [LARGE SCALE GENOMIC DNA]</scope>
    <source>
        <strain>Philadelphia 1 / ATCC 33152 / DSM 7513</strain>
    </source>
</reference>
<reference key="2">
    <citation type="journal article" date="2011" name="Proc. Natl. Acad. Sci. U.S.A.">
        <title>Legionella pneumophila regulates the small GTPase Rab1 activity by reversible phosphorylcholination.</title>
        <authorList>
            <person name="Tan Y."/>
            <person name="Arnold R.J."/>
            <person name="Luo Z.Q."/>
        </authorList>
    </citation>
    <scope>FUNCTION</scope>
    <scope>CATALYTIC ACTIVITY</scope>
    <scope>SUBCELLULAR LOCATION</scope>
</reference>
<reference key="3">
    <citation type="journal article" date="2012" name="EMBO J.">
        <title>Reversible phosphocholination of Rab proteins by Legionella pneumophila effector proteins.</title>
        <authorList>
            <person name="Goody P.R."/>
            <person name="Heller K."/>
            <person name="Oesterlin L.K."/>
            <person name="Muller M.P."/>
            <person name="Itzen A."/>
            <person name="Goody R.S."/>
        </authorList>
    </citation>
    <scope>FUNCTION</scope>
    <scope>BIOPHYSICOCHEMICAL PROPERTIES</scope>
</reference>
<reference key="4">
    <citation type="journal article" date="2012" name="Proc. Natl. Acad. Sci. U.S.A.">
        <title>Posttranslational modifications of Rab proteins cause effective displacement of GDP dissociation inhibitor.</title>
        <authorList>
            <person name="Oesterlin L.K."/>
            <person name="Goody R.S."/>
            <person name="Itzen A."/>
        </authorList>
    </citation>
    <scope>FUNCTION</scope>
</reference>
<evidence type="ECO:0000269" key="1">
    <source>
    </source>
</evidence>
<evidence type="ECO:0000269" key="2">
    <source>
    </source>
</evidence>
<evidence type="ECO:0000269" key="3">
    <source>
    </source>
</evidence>
<evidence type="ECO:0007829" key="4">
    <source>
        <dbReference type="PDB" id="8ALK"/>
    </source>
</evidence>
<keyword id="KW-0002">3D-structure</keyword>
<keyword id="KW-1035">Host cytoplasm</keyword>
<keyword id="KW-0378">Hydrolase</keyword>
<keyword id="KW-1185">Reference proteome</keyword>
<keyword id="KW-0964">Secreted</keyword>
<keyword id="KW-0843">Virulence</keyword>
<feature type="chain" id="PRO_0000417546" description="Phosphocholine hydrolase Lem3">
    <location>
        <begin position="1"/>
        <end position="570"/>
    </location>
</feature>
<feature type="strand" evidence="4">
    <location>
        <begin position="22"/>
        <end position="24"/>
    </location>
</feature>
<feature type="strand" evidence="4">
    <location>
        <begin position="29"/>
        <end position="32"/>
    </location>
</feature>
<feature type="helix" evidence="4">
    <location>
        <begin position="35"/>
        <end position="38"/>
    </location>
</feature>
<feature type="helix" evidence="4">
    <location>
        <begin position="43"/>
        <end position="50"/>
    </location>
</feature>
<feature type="strand" evidence="4">
    <location>
        <begin position="51"/>
        <end position="57"/>
    </location>
</feature>
<feature type="strand" evidence="4">
    <location>
        <begin position="60"/>
        <end position="66"/>
    </location>
</feature>
<feature type="strand" evidence="4">
    <location>
        <begin position="71"/>
        <end position="73"/>
    </location>
</feature>
<feature type="strand" evidence="4">
    <location>
        <begin position="75"/>
        <end position="79"/>
    </location>
</feature>
<feature type="strand" evidence="4">
    <location>
        <begin position="82"/>
        <end position="90"/>
    </location>
</feature>
<feature type="strand" evidence="4">
    <location>
        <begin position="96"/>
        <end position="106"/>
    </location>
</feature>
<feature type="helix" evidence="4">
    <location>
        <begin position="114"/>
        <end position="133"/>
    </location>
</feature>
<feature type="helix" evidence="4">
    <location>
        <begin position="138"/>
        <end position="146"/>
    </location>
</feature>
<feature type="strand" evidence="4">
    <location>
        <begin position="166"/>
        <end position="176"/>
    </location>
</feature>
<feature type="turn" evidence="4">
    <location>
        <begin position="177"/>
        <end position="179"/>
    </location>
</feature>
<feature type="strand" evidence="4">
    <location>
        <begin position="180"/>
        <end position="190"/>
    </location>
</feature>
<feature type="strand" evidence="4">
    <location>
        <begin position="192"/>
        <end position="196"/>
    </location>
</feature>
<feature type="strand" evidence="4">
    <location>
        <begin position="202"/>
        <end position="206"/>
    </location>
</feature>
<feature type="strand" evidence="4">
    <location>
        <begin position="208"/>
        <end position="212"/>
    </location>
</feature>
<feature type="strand" evidence="4">
    <location>
        <begin position="217"/>
        <end position="219"/>
    </location>
</feature>
<feature type="turn" evidence="4">
    <location>
        <begin position="223"/>
        <end position="227"/>
    </location>
</feature>
<feature type="turn" evidence="4">
    <location>
        <begin position="233"/>
        <end position="235"/>
    </location>
</feature>
<feature type="strand" evidence="4">
    <location>
        <begin position="237"/>
        <end position="243"/>
    </location>
</feature>
<feature type="strand" evidence="4">
    <location>
        <begin position="248"/>
        <end position="252"/>
    </location>
</feature>
<feature type="helix" evidence="4">
    <location>
        <begin position="254"/>
        <end position="257"/>
    </location>
</feature>
<feature type="strand" evidence="4">
    <location>
        <begin position="262"/>
        <end position="267"/>
    </location>
</feature>
<feature type="strand" evidence="4">
    <location>
        <begin position="269"/>
        <end position="276"/>
    </location>
</feature>
<feature type="helix" evidence="4">
    <location>
        <begin position="278"/>
        <end position="282"/>
    </location>
</feature>
<feature type="helix" evidence="4">
    <location>
        <begin position="283"/>
        <end position="288"/>
    </location>
</feature>
<feature type="helix" evidence="4">
    <location>
        <begin position="296"/>
        <end position="327"/>
    </location>
</feature>
<feature type="helix" evidence="4">
    <location>
        <begin position="330"/>
        <end position="332"/>
    </location>
</feature>
<feature type="helix" evidence="4">
    <location>
        <begin position="338"/>
        <end position="347"/>
    </location>
</feature>
<feature type="helix" evidence="4">
    <location>
        <begin position="351"/>
        <end position="362"/>
    </location>
</feature>
<feature type="strand" evidence="4">
    <location>
        <begin position="374"/>
        <end position="376"/>
    </location>
</feature>
<feature type="helix" evidence="4">
    <location>
        <begin position="380"/>
        <end position="389"/>
    </location>
</feature>
<feature type="strand" evidence="4">
    <location>
        <begin position="395"/>
        <end position="402"/>
    </location>
</feature>
<feature type="helix" evidence="4">
    <location>
        <begin position="406"/>
        <end position="416"/>
    </location>
</feature>
<feature type="helix" evidence="4">
    <location>
        <begin position="418"/>
        <end position="420"/>
    </location>
</feature>
<feature type="helix" evidence="4">
    <location>
        <begin position="421"/>
        <end position="424"/>
    </location>
</feature>
<feature type="helix" evidence="4">
    <location>
        <begin position="425"/>
        <end position="430"/>
    </location>
</feature>
<feature type="helix" evidence="4">
    <location>
        <begin position="435"/>
        <end position="447"/>
    </location>
</feature>
<feature type="strand" evidence="4">
    <location>
        <begin position="454"/>
        <end position="457"/>
    </location>
</feature>
<feature type="helix" evidence="4">
    <location>
        <begin position="458"/>
        <end position="460"/>
    </location>
</feature>
<feature type="strand" evidence="4">
    <location>
        <begin position="464"/>
        <end position="467"/>
    </location>
</feature>
<feature type="helix" evidence="4">
    <location>
        <begin position="469"/>
        <end position="482"/>
    </location>
</feature>
<proteinExistence type="evidence at protein level"/>
<organism>
    <name type="scientific">Legionella pneumophila subsp. pneumophila (strain Philadelphia 1 / ATCC 33152 / DSM 7513)</name>
    <dbReference type="NCBI Taxonomy" id="272624"/>
    <lineage>
        <taxon>Bacteria</taxon>
        <taxon>Pseudomonadati</taxon>
        <taxon>Pseudomonadota</taxon>
        <taxon>Gammaproteobacteria</taxon>
        <taxon>Legionellales</taxon>
        <taxon>Legionellaceae</taxon>
        <taxon>Legionella</taxon>
    </lineage>
</organism>
<comment type="function">
    <text evidence="1 2 3">Virulence effector that plays a role in hijacking the host vesicular trafficking by recruiting the small guanosine triphosphatase (GTPase) Rab1 to the cytosolic face of the Legionella-containing vacuole (LCVs). Acts as a phosphocholine hydrolase by mediating the hydrolysis of phosphocholine to Ser residues of host RAB1 (RAB1A, RAB1B or RAB1C). Dephosphocholination of target proteins restores accessibility to GTPase effector LepB. Can act on both GDP-bound and GTP-bound Rab proteins.</text>
</comment>
<comment type="catalytic activity">
    <reaction evidence="1">
        <text>[Rab1 protein]-O-phosphocholine-L-serine + H2O = [Rab1 protein]-L-serine + phosphocholine + H(+)</text>
        <dbReference type="Rhea" id="RHEA:56084"/>
        <dbReference type="Rhea" id="RHEA-COMP:14085"/>
        <dbReference type="Rhea" id="RHEA-COMP:14376"/>
        <dbReference type="ChEBI" id="CHEBI:15377"/>
        <dbReference type="ChEBI" id="CHEBI:15378"/>
        <dbReference type="ChEBI" id="CHEBI:29999"/>
        <dbReference type="ChEBI" id="CHEBI:138595"/>
        <dbReference type="ChEBI" id="CHEBI:295975"/>
    </reaction>
</comment>
<comment type="biophysicochemical properties">
    <kinetics>
        <KM evidence="2">65.5 uM for GDP-bound RAB1B</KM>
    </kinetics>
</comment>
<comment type="subcellular location">
    <subcellularLocation>
        <location evidence="1">Secreted</location>
    </subcellularLocation>
    <subcellularLocation>
        <location evidence="1">Host cytoplasm</location>
    </subcellularLocation>
    <text>Translocated into the host cell via the type IV secretion system (T4SS).</text>
</comment>
<accession>Q5ZXN5</accession>